<feature type="chain" id="PRO_0000242643" description="Ubiquitin-like domain-containing CTD phosphatase 1">
    <location>
        <begin position="1"/>
        <end position="318"/>
    </location>
</feature>
<feature type="domain" description="Ubiquitin-like" evidence="3">
    <location>
        <begin position="3"/>
        <end position="81"/>
    </location>
</feature>
<feature type="domain" description="FCP1 homology" evidence="4">
    <location>
        <begin position="133"/>
        <end position="294"/>
    </location>
</feature>
<feature type="binding site" evidence="2">
    <location>
        <position position="143"/>
    </location>
    <ligand>
        <name>Mg(2+)</name>
        <dbReference type="ChEBI" id="CHEBI:18420"/>
    </ligand>
</feature>
<feature type="binding site" evidence="2">
    <location>
        <position position="145"/>
    </location>
    <ligand>
        <name>Mg(2+)</name>
        <dbReference type="ChEBI" id="CHEBI:18420"/>
    </ligand>
</feature>
<feature type="binding site" evidence="2">
    <location>
        <position position="253"/>
    </location>
    <ligand>
        <name>Mg(2+)</name>
        <dbReference type="ChEBI" id="CHEBI:18420"/>
    </ligand>
</feature>
<feature type="modified residue" description="N6-acetyllysine" evidence="1">
    <location>
        <position position="117"/>
    </location>
</feature>
<comment type="function">
    <text evidence="1">Dephosphorylates 26S nuclear proteasomes, thereby decreasing their proteolytic activity. Recruited to the 19S regulatory particle of the 26S proteasome through its interaction with 19S component PSMD2/RPN1. Once recruited, dephosphorylates 19S component PSMC2/RPT1 which impairs PSMC2 ATPase activity and disrupts 26S proteasome assembly. Has also been reported to stimulate the proteolytic activity of the 26S proteasome.</text>
</comment>
<comment type="catalytic activity">
    <reaction evidence="1">
        <text>O-phospho-L-seryl-[protein] + H2O = L-seryl-[protein] + phosphate</text>
        <dbReference type="Rhea" id="RHEA:20629"/>
        <dbReference type="Rhea" id="RHEA-COMP:9863"/>
        <dbReference type="Rhea" id="RHEA-COMP:11604"/>
        <dbReference type="ChEBI" id="CHEBI:15377"/>
        <dbReference type="ChEBI" id="CHEBI:29999"/>
        <dbReference type="ChEBI" id="CHEBI:43474"/>
        <dbReference type="ChEBI" id="CHEBI:83421"/>
        <dbReference type="EC" id="3.1.3.16"/>
    </reaction>
</comment>
<comment type="catalytic activity">
    <reaction evidence="1">
        <text>O-phospho-L-threonyl-[protein] + H2O = L-threonyl-[protein] + phosphate</text>
        <dbReference type="Rhea" id="RHEA:47004"/>
        <dbReference type="Rhea" id="RHEA-COMP:11060"/>
        <dbReference type="Rhea" id="RHEA-COMP:11605"/>
        <dbReference type="ChEBI" id="CHEBI:15377"/>
        <dbReference type="ChEBI" id="CHEBI:30013"/>
        <dbReference type="ChEBI" id="CHEBI:43474"/>
        <dbReference type="ChEBI" id="CHEBI:61977"/>
        <dbReference type="EC" id="3.1.3.16"/>
    </reaction>
</comment>
<comment type="cofactor">
    <cofactor evidence="1">
        <name>Mg(2+)</name>
        <dbReference type="ChEBI" id="CHEBI:18420"/>
    </cofactor>
</comment>
<comment type="subcellular location">
    <subcellularLocation>
        <location evidence="1">Nucleus</location>
    </subcellularLocation>
    <text evidence="1">Colocalizes with nuclear proteasomes.</text>
</comment>
<comment type="domain">
    <text evidence="1">The Ubiquitin-like domain mediates interaction with proteasomes.</text>
</comment>
<proteinExistence type="evidence at transcript level"/>
<sequence>MSLPIIVKWGGQEYSVTTLSEDDTVLDLKQFLKTLTGVLPERQKLLGLKVKGKPAENDVKLGALKLKPNTKIMMMGTREESLEDVLCPPPDNDDVINDFDIEDEVVEVENREENLLKISRRVKEYKVEVLNPPREGKKLLVLDVDYTLFDHRSCAETGVELMRPYLHEFLTSAYEDYDIVIWSATNMKWIEAKMKELGVSTNANYKITFMLDSAAMITVHTPRRGLIDVKPLGVIWGKFSEFYSKKNTIMFDDIGRNFLMNPQNGLKIRPFMKAHLNRDKDKELVKLTQYLKEIAKLDDFLELNHKYWERYLSKKQGQ</sequence>
<gene>
    <name type="primary">Ublcp1</name>
</gene>
<evidence type="ECO:0000250" key="1">
    <source>
        <dbReference type="UniProtKB" id="Q8WVY7"/>
    </source>
</evidence>
<evidence type="ECO:0000250" key="2">
    <source>
        <dbReference type="UniProtKB" id="Q9XZ16"/>
    </source>
</evidence>
<evidence type="ECO:0000255" key="3">
    <source>
        <dbReference type="PROSITE-ProRule" id="PRU00214"/>
    </source>
</evidence>
<evidence type="ECO:0000255" key="4">
    <source>
        <dbReference type="PROSITE-ProRule" id="PRU00336"/>
    </source>
</evidence>
<keyword id="KW-0007">Acetylation</keyword>
<keyword id="KW-0378">Hydrolase</keyword>
<keyword id="KW-0460">Magnesium</keyword>
<keyword id="KW-0479">Metal-binding</keyword>
<keyword id="KW-0539">Nucleus</keyword>
<keyword id="KW-0904">Protein phosphatase</keyword>
<keyword id="KW-1185">Reference proteome</keyword>
<accession>Q5FWT7</accession>
<dbReference type="EC" id="3.1.3.16" evidence="1"/>
<dbReference type="EMBL" id="BC089210">
    <property type="protein sequence ID" value="AAH89210.1"/>
    <property type="molecule type" value="mRNA"/>
</dbReference>
<dbReference type="RefSeq" id="NP_001014139.1">
    <property type="nucleotide sequence ID" value="NM_001014117.2"/>
</dbReference>
<dbReference type="BMRB" id="Q5FWT7"/>
<dbReference type="SMR" id="Q5FWT7"/>
<dbReference type="BioGRID" id="261993">
    <property type="interactions" value="6"/>
</dbReference>
<dbReference type="FunCoup" id="Q5FWT7">
    <property type="interactions" value="3199"/>
</dbReference>
<dbReference type="STRING" id="10116.ENSRNOP00000006063"/>
<dbReference type="iPTMnet" id="Q5FWT7"/>
<dbReference type="PhosphoSitePlus" id="Q5FWT7"/>
<dbReference type="jPOST" id="Q5FWT7"/>
<dbReference type="PaxDb" id="10116-ENSRNOP00000006063"/>
<dbReference type="Ensembl" id="ENSRNOT00000006063.8">
    <property type="protein sequence ID" value="ENSRNOP00000006063.7"/>
    <property type="gene ID" value="ENSRNOG00000004477.8"/>
</dbReference>
<dbReference type="GeneID" id="360514"/>
<dbReference type="KEGG" id="rno:360514"/>
<dbReference type="UCSC" id="RGD:1310386">
    <property type="organism name" value="rat"/>
</dbReference>
<dbReference type="AGR" id="RGD:1310386"/>
<dbReference type="CTD" id="134510"/>
<dbReference type="RGD" id="1310386">
    <property type="gene designation" value="Ublcp1"/>
</dbReference>
<dbReference type="eggNOG" id="KOG1605">
    <property type="taxonomic scope" value="Eukaryota"/>
</dbReference>
<dbReference type="eggNOG" id="KOG1872">
    <property type="taxonomic scope" value="Eukaryota"/>
</dbReference>
<dbReference type="GeneTree" id="ENSGT00390000010107"/>
<dbReference type="HOGENOM" id="CLU_046931_1_0_1"/>
<dbReference type="InParanoid" id="Q5FWT7"/>
<dbReference type="OMA" id="TVHTPKY"/>
<dbReference type="OrthoDB" id="1711508at2759"/>
<dbReference type="PhylomeDB" id="Q5FWT7"/>
<dbReference type="TreeFam" id="TF323786"/>
<dbReference type="PRO" id="PR:Q5FWT7"/>
<dbReference type="Proteomes" id="UP000002494">
    <property type="component" value="Chromosome 10"/>
</dbReference>
<dbReference type="GO" id="GO:0005730">
    <property type="term" value="C:nucleolus"/>
    <property type="evidence" value="ECO:0007669"/>
    <property type="project" value="Ensembl"/>
</dbReference>
<dbReference type="GO" id="GO:0005654">
    <property type="term" value="C:nucleoplasm"/>
    <property type="evidence" value="ECO:0007669"/>
    <property type="project" value="Ensembl"/>
</dbReference>
<dbReference type="GO" id="GO:0005634">
    <property type="term" value="C:nucleus"/>
    <property type="evidence" value="ECO:0000266"/>
    <property type="project" value="RGD"/>
</dbReference>
<dbReference type="GO" id="GO:0046872">
    <property type="term" value="F:metal ion binding"/>
    <property type="evidence" value="ECO:0007669"/>
    <property type="project" value="UniProtKB-KW"/>
</dbReference>
<dbReference type="GO" id="GO:1904855">
    <property type="term" value="F:proteasome regulatory particle binding"/>
    <property type="evidence" value="ECO:0000266"/>
    <property type="project" value="RGD"/>
</dbReference>
<dbReference type="GO" id="GO:0004722">
    <property type="term" value="F:protein serine/threonine phosphatase activity"/>
    <property type="evidence" value="ECO:0000266"/>
    <property type="project" value="RGD"/>
</dbReference>
<dbReference type="GO" id="GO:0090364">
    <property type="term" value="P:regulation of proteasome assembly"/>
    <property type="evidence" value="ECO:0000266"/>
    <property type="project" value="RGD"/>
</dbReference>
<dbReference type="CDD" id="cd01813">
    <property type="entry name" value="Ubl_UBLCP1"/>
    <property type="match status" value="1"/>
</dbReference>
<dbReference type="FunFam" id="3.40.50.1000:FF:000050">
    <property type="entry name" value="Ubiquitin-like domain-containing CTD phosphatase 1"/>
    <property type="match status" value="1"/>
</dbReference>
<dbReference type="FunFam" id="3.10.20.90:FF:000060">
    <property type="entry name" value="ubiquitin-like domain-containing CTD phosphatase 1"/>
    <property type="match status" value="1"/>
</dbReference>
<dbReference type="Gene3D" id="3.40.50.1000">
    <property type="entry name" value="HAD superfamily/HAD-like"/>
    <property type="match status" value="1"/>
</dbReference>
<dbReference type="Gene3D" id="3.10.20.90">
    <property type="entry name" value="Phosphatidylinositol 3-kinase Catalytic Subunit, Chain A, domain 1"/>
    <property type="match status" value="1"/>
</dbReference>
<dbReference type="InterPro" id="IPR004274">
    <property type="entry name" value="FCP1_dom"/>
</dbReference>
<dbReference type="InterPro" id="IPR036412">
    <property type="entry name" value="HAD-like_sf"/>
</dbReference>
<dbReference type="InterPro" id="IPR011943">
    <property type="entry name" value="HAD-SF_hydro_IIID"/>
</dbReference>
<dbReference type="InterPro" id="IPR023214">
    <property type="entry name" value="HAD_sf"/>
</dbReference>
<dbReference type="InterPro" id="IPR000626">
    <property type="entry name" value="Ubiquitin-like_dom"/>
</dbReference>
<dbReference type="InterPro" id="IPR029071">
    <property type="entry name" value="Ubiquitin-like_domsf"/>
</dbReference>
<dbReference type="InterPro" id="IPR051658">
    <property type="entry name" value="UBLCP1"/>
</dbReference>
<dbReference type="NCBIfam" id="TIGR02245">
    <property type="entry name" value="HAD_IIID1"/>
    <property type="match status" value="1"/>
</dbReference>
<dbReference type="PANTHER" id="PTHR48493">
    <property type="entry name" value="UBIQUITIN-LIKE DOMAIN-CONTAINING CTD PHOSPHATASE 1"/>
    <property type="match status" value="1"/>
</dbReference>
<dbReference type="PANTHER" id="PTHR48493:SF1">
    <property type="entry name" value="UBIQUITIN-LIKE DOMAIN-CONTAINING CTD PHOSPHATASE 1"/>
    <property type="match status" value="1"/>
</dbReference>
<dbReference type="Pfam" id="PF03031">
    <property type="entry name" value="NIF"/>
    <property type="match status" value="1"/>
</dbReference>
<dbReference type="Pfam" id="PF00240">
    <property type="entry name" value="ubiquitin"/>
    <property type="match status" value="1"/>
</dbReference>
<dbReference type="SMART" id="SM00577">
    <property type="entry name" value="CPDc"/>
    <property type="match status" value="1"/>
</dbReference>
<dbReference type="SMART" id="SM00213">
    <property type="entry name" value="UBQ"/>
    <property type="match status" value="1"/>
</dbReference>
<dbReference type="SUPFAM" id="SSF56784">
    <property type="entry name" value="HAD-like"/>
    <property type="match status" value="1"/>
</dbReference>
<dbReference type="SUPFAM" id="SSF54236">
    <property type="entry name" value="Ubiquitin-like"/>
    <property type="match status" value="1"/>
</dbReference>
<dbReference type="PROSITE" id="PS50969">
    <property type="entry name" value="FCP1"/>
    <property type="match status" value="1"/>
</dbReference>
<dbReference type="PROSITE" id="PS50053">
    <property type="entry name" value="UBIQUITIN_2"/>
    <property type="match status" value="1"/>
</dbReference>
<organism>
    <name type="scientific">Rattus norvegicus</name>
    <name type="common">Rat</name>
    <dbReference type="NCBI Taxonomy" id="10116"/>
    <lineage>
        <taxon>Eukaryota</taxon>
        <taxon>Metazoa</taxon>
        <taxon>Chordata</taxon>
        <taxon>Craniata</taxon>
        <taxon>Vertebrata</taxon>
        <taxon>Euteleostomi</taxon>
        <taxon>Mammalia</taxon>
        <taxon>Eutheria</taxon>
        <taxon>Euarchontoglires</taxon>
        <taxon>Glires</taxon>
        <taxon>Rodentia</taxon>
        <taxon>Myomorpha</taxon>
        <taxon>Muroidea</taxon>
        <taxon>Muridae</taxon>
        <taxon>Murinae</taxon>
        <taxon>Rattus</taxon>
    </lineage>
</organism>
<reference key="1">
    <citation type="journal article" date="2004" name="Genome Res.">
        <title>The status, quality, and expansion of the NIH full-length cDNA project: the Mammalian Gene Collection (MGC).</title>
        <authorList>
            <consortium name="The MGC Project Team"/>
        </authorList>
    </citation>
    <scope>NUCLEOTIDE SEQUENCE [LARGE SCALE MRNA]</scope>
    <source>
        <tissue>Ovary</tissue>
    </source>
</reference>
<name>UBCP1_RAT</name>
<protein>
    <recommendedName>
        <fullName>Ubiquitin-like domain-containing CTD phosphatase 1</fullName>
        <ecNumber evidence="1">3.1.3.16</ecNumber>
    </recommendedName>
    <alternativeName>
        <fullName>Nuclear proteasome inhibitor UBLCP1</fullName>
    </alternativeName>
</protein>